<feature type="chain" id="PRO_0000374415" description="tRNA-2-methylthio-N(6)-dimethylallyladenosine synthase">
    <location>
        <begin position="1"/>
        <end position="496"/>
    </location>
</feature>
<feature type="domain" description="MTTase N-terminal" evidence="1">
    <location>
        <begin position="10"/>
        <end position="126"/>
    </location>
</feature>
<feature type="domain" description="Radical SAM core" evidence="2">
    <location>
        <begin position="149"/>
        <end position="380"/>
    </location>
</feature>
<feature type="domain" description="TRAM" evidence="1">
    <location>
        <begin position="382"/>
        <end position="451"/>
    </location>
</feature>
<feature type="region of interest" description="Disordered" evidence="3">
    <location>
        <begin position="465"/>
        <end position="496"/>
    </location>
</feature>
<feature type="compositionally biased region" description="Pro residues" evidence="3">
    <location>
        <begin position="487"/>
        <end position="496"/>
    </location>
</feature>
<feature type="binding site" evidence="1">
    <location>
        <position position="19"/>
    </location>
    <ligand>
        <name>[4Fe-4S] cluster</name>
        <dbReference type="ChEBI" id="CHEBI:49883"/>
        <label>1</label>
    </ligand>
</feature>
<feature type="binding site" evidence="1">
    <location>
        <position position="55"/>
    </location>
    <ligand>
        <name>[4Fe-4S] cluster</name>
        <dbReference type="ChEBI" id="CHEBI:49883"/>
        <label>1</label>
    </ligand>
</feature>
<feature type="binding site" evidence="1">
    <location>
        <position position="89"/>
    </location>
    <ligand>
        <name>[4Fe-4S] cluster</name>
        <dbReference type="ChEBI" id="CHEBI:49883"/>
        <label>1</label>
    </ligand>
</feature>
<feature type="binding site" evidence="1">
    <location>
        <position position="163"/>
    </location>
    <ligand>
        <name>[4Fe-4S] cluster</name>
        <dbReference type="ChEBI" id="CHEBI:49883"/>
        <label>2</label>
        <note>4Fe-4S-S-AdoMet</note>
    </ligand>
</feature>
<feature type="binding site" evidence="1">
    <location>
        <position position="167"/>
    </location>
    <ligand>
        <name>[4Fe-4S] cluster</name>
        <dbReference type="ChEBI" id="CHEBI:49883"/>
        <label>2</label>
        <note>4Fe-4S-S-AdoMet</note>
    </ligand>
</feature>
<feature type="binding site" evidence="1">
    <location>
        <position position="170"/>
    </location>
    <ligand>
        <name>[4Fe-4S] cluster</name>
        <dbReference type="ChEBI" id="CHEBI:49883"/>
        <label>2</label>
        <note>4Fe-4S-S-AdoMet</note>
    </ligand>
</feature>
<organism>
    <name type="scientific">Nocardioides sp. (strain ATCC BAA-499 / JS614)</name>
    <dbReference type="NCBI Taxonomy" id="196162"/>
    <lineage>
        <taxon>Bacteria</taxon>
        <taxon>Bacillati</taxon>
        <taxon>Actinomycetota</taxon>
        <taxon>Actinomycetes</taxon>
        <taxon>Propionibacteriales</taxon>
        <taxon>Nocardioidaceae</taxon>
        <taxon>Nocardioides</taxon>
    </lineage>
</organism>
<reference key="1">
    <citation type="submission" date="2006-12" db="EMBL/GenBank/DDBJ databases">
        <title>Complete sequence of chromosome 1 of Nocardioides sp. JS614.</title>
        <authorList>
            <person name="Copeland A."/>
            <person name="Lucas S."/>
            <person name="Lapidus A."/>
            <person name="Barry K."/>
            <person name="Detter J.C."/>
            <person name="Glavina del Rio T."/>
            <person name="Hammon N."/>
            <person name="Israni S."/>
            <person name="Dalin E."/>
            <person name="Tice H."/>
            <person name="Pitluck S."/>
            <person name="Thompson L.S."/>
            <person name="Brettin T."/>
            <person name="Bruce D."/>
            <person name="Han C."/>
            <person name="Tapia R."/>
            <person name="Schmutz J."/>
            <person name="Larimer F."/>
            <person name="Land M."/>
            <person name="Hauser L."/>
            <person name="Kyrpides N."/>
            <person name="Kim E."/>
            <person name="Mattes T."/>
            <person name="Gossett J."/>
            <person name="Richardson P."/>
        </authorList>
    </citation>
    <scope>NUCLEOTIDE SEQUENCE [LARGE SCALE GENOMIC DNA]</scope>
    <source>
        <strain>ATCC BAA-499 / JS614</strain>
    </source>
</reference>
<accession>A1SNG0</accession>
<evidence type="ECO:0000255" key="1">
    <source>
        <dbReference type="HAMAP-Rule" id="MF_01864"/>
    </source>
</evidence>
<evidence type="ECO:0000255" key="2">
    <source>
        <dbReference type="PROSITE-ProRule" id="PRU01266"/>
    </source>
</evidence>
<evidence type="ECO:0000256" key="3">
    <source>
        <dbReference type="SAM" id="MobiDB-lite"/>
    </source>
</evidence>
<protein>
    <recommendedName>
        <fullName evidence="1">tRNA-2-methylthio-N(6)-dimethylallyladenosine synthase</fullName>
        <ecNumber evidence="1">2.8.4.3</ecNumber>
    </recommendedName>
    <alternativeName>
        <fullName evidence="1">(Dimethylallyl)adenosine tRNA methylthiotransferase MiaB</fullName>
    </alternativeName>
    <alternativeName>
        <fullName evidence="1">tRNA-i(6)A37 methylthiotransferase</fullName>
    </alternativeName>
</protein>
<keyword id="KW-0004">4Fe-4S</keyword>
<keyword id="KW-0963">Cytoplasm</keyword>
<keyword id="KW-0408">Iron</keyword>
<keyword id="KW-0411">Iron-sulfur</keyword>
<keyword id="KW-0479">Metal-binding</keyword>
<keyword id="KW-1185">Reference proteome</keyword>
<keyword id="KW-0949">S-adenosyl-L-methionine</keyword>
<keyword id="KW-0808">Transferase</keyword>
<keyword id="KW-0819">tRNA processing</keyword>
<sequence length="496" mass="53818">MSTAQHTSPRTYEVRTYGCQMNVHDSERLTGLLEDAGYVAAPDGQQADVVVFNTCAVRENADNKLYGNLGHLAPVKAATPGMQIAVGGCLAQKDRDTITTRAPWVDVVFGTHNIGSLPALLERARVQDEAQVEILESLEVFPSTLPTRRESAYAAWVSVSVGCNNTCTFCIVPSLRGKEKDRRPGEILAEVEALVADGVSEITLLGQNVNAYGVEFGDRQAFSKLLRACGEVDGLERVRFTSPHPAEFTDDVIAAMAETPNVMPQLHMPLQSGSDKVLRDMRRSYRQRKFLGILERVRAAMPDAAITTDIIVGFPGETEEDFLQTMHVVRAARFSGAFTFQYSKRPGTPAATLPDQVPPEVVKDRYERLVALVNEIAWEENKRLVGRRVELMVAEGEGRKDAATHRLSGRGPDNRLVHFAPPAGVEIRPGDLATVEVTYAAPHHLVADGPVVDVRRTRSGDAWAARNAAPAPSSGVTLGMPTVGAPAPLPDAPACR</sequence>
<dbReference type="EC" id="2.8.4.3" evidence="1"/>
<dbReference type="EMBL" id="CP000509">
    <property type="protein sequence ID" value="ABL83345.1"/>
    <property type="molecule type" value="Genomic_DNA"/>
</dbReference>
<dbReference type="RefSeq" id="WP_011757276.1">
    <property type="nucleotide sequence ID" value="NC_008699.1"/>
</dbReference>
<dbReference type="SMR" id="A1SNG0"/>
<dbReference type="STRING" id="196162.Noca_3847"/>
<dbReference type="KEGG" id="nca:Noca_3847"/>
<dbReference type="eggNOG" id="COG0621">
    <property type="taxonomic scope" value="Bacteria"/>
</dbReference>
<dbReference type="HOGENOM" id="CLU_018697_2_2_11"/>
<dbReference type="OrthoDB" id="9805215at2"/>
<dbReference type="Proteomes" id="UP000000640">
    <property type="component" value="Chromosome"/>
</dbReference>
<dbReference type="GO" id="GO:0005829">
    <property type="term" value="C:cytosol"/>
    <property type="evidence" value="ECO:0007669"/>
    <property type="project" value="TreeGrafter"/>
</dbReference>
<dbReference type="GO" id="GO:0051539">
    <property type="term" value="F:4 iron, 4 sulfur cluster binding"/>
    <property type="evidence" value="ECO:0007669"/>
    <property type="project" value="UniProtKB-UniRule"/>
</dbReference>
<dbReference type="GO" id="GO:0046872">
    <property type="term" value="F:metal ion binding"/>
    <property type="evidence" value="ECO:0007669"/>
    <property type="project" value="UniProtKB-KW"/>
</dbReference>
<dbReference type="GO" id="GO:0035597">
    <property type="term" value="F:N6-isopentenyladenosine methylthiotransferase activity"/>
    <property type="evidence" value="ECO:0007669"/>
    <property type="project" value="TreeGrafter"/>
</dbReference>
<dbReference type="CDD" id="cd01335">
    <property type="entry name" value="Radical_SAM"/>
    <property type="match status" value="1"/>
</dbReference>
<dbReference type="FunFam" id="3.40.50.12160:FF:000003">
    <property type="entry name" value="CDK5 regulatory subunit-associated protein 1"/>
    <property type="match status" value="1"/>
</dbReference>
<dbReference type="FunFam" id="3.80.30.20:FF:000001">
    <property type="entry name" value="tRNA-2-methylthio-N(6)-dimethylallyladenosine synthase 2"/>
    <property type="match status" value="1"/>
</dbReference>
<dbReference type="Gene3D" id="3.40.50.12160">
    <property type="entry name" value="Methylthiotransferase, N-terminal domain"/>
    <property type="match status" value="1"/>
</dbReference>
<dbReference type="Gene3D" id="3.80.30.20">
    <property type="entry name" value="tm_1862 like domain"/>
    <property type="match status" value="1"/>
</dbReference>
<dbReference type="HAMAP" id="MF_01864">
    <property type="entry name" value="tRNA_metthiotr_MiaB"/>
    <property type="match status" value="1"/>
</dbReference>
<dbReference type="InterPro" id="IPR006638">
    <property type="entry name" value="Elp3/MiaA/NifB-like_rSAM"/>
</dbReference>
<dbReference type="InterPro" id="IPR005839">
    <property type="entry name" value="Methylthiotransferase"/>
</dbReference>
<dbReference type="InterPro" id="IPR020612">
    <property type="entry name" value="Methylthiotransferase_CS"/>
</dbReference>
<dbReference type="InterPro" id="IPR013848">
    <property type="entry name" value="Methylthiotransferase_N"/>
</dbReference>
<dbReference type="InterPro" id="IPR038135">
    <property type="entry name" value="Methylthiotransferase_N_sf"/>
</dbReference>
<dbReference type="InterPro" id="IPR006463">
    <property type="entry name" value="MiaB_methiolase"/>
</dbReference>
<dbReference type="InterPro" id="IPR007197">
    <property type="entry name" value="rSAM"/>
</dbReference>
<dbReference type="InterPro" id="IPR023404">
    <property type="entry name" value="rSAM_horseshoe"/>
</dbReference>
<dbReference type="InterPro" id="IPR002792">
    <property type="entry name" value="TRAM_dom"/>
</dbReference>
<dbReference type="NCBIfam" id="TIGR01574">
    <property type="entry name" value="miaB-methiolase"/>
    <property type="match status" value="1"/>
</dbReference>
<dbReference type="NCBIfam" id="TIGR00089">
    <property type="entry name" value="MiaB/RimO family radical SAM methylthiotransferase"/>
    <property type="match status" value="1"/>
</dbReference>
<dbReference type="PANTHER" id="PTHR43020">
    <property type="entry name" value="CDK5 REGULATORY SUBUNIT-ASSOCIATED PROTEIN 1"/>
    <property type="match status" value="1"/>
</dbReference>
<dbReference type="PANTHER" id="PTHR43020:SF2">
    <property type="entry name" value="MITOCHONDRIAL TRNA METHYLTHIOTRANSFERASE CDK5RAP1"/>
    <property type="match status" value="1"/>
</dbReference>
<dbReference type="Pfam" id="PF04055">
    <property type="entry name" value="Radical_SAM"/>
    <property type="match status" value="1"/>
</dbReference>
<dbReference type="Pfam" id="PF00919">
    <property type="entry name" value="UPF0004"/>
    <property type="match status" value="1"/>
</dbReference>
<dbReference type="SFLD" id="SFLDF00273">
    <property type="entry name" value="(dimethylallyl)adenosine_tRNA"/>
    <property type="match status" value="1"/>
</dbReference>
<dbReference type="SFLD" id="SFLDG01082">
    <property type="entry name" value="B12-binding_domain_containing"/>
    <property type="match status" value="1"/>
</dbReference>
<dbReference type="SFLD" id="SFLDG01061">
    <property type="entry name" value="methylthiotransferase"/>
    <property type="match status" value="1"/>
</dbReference>
<dbReference type="SMART" id="SM00729">
    <property type="entry name" value="Elp3"/>
    <property type="match status" value="1"/>
</dbReference>
<dbReference type="SUPFAM" id="SSF102114">
    <property type="entry name" value="Radical SAM enzymes"/>
    <property type="match status" value="1"/>
</dbReference>
<dbReference type="PROSITE" id="PS51449">
    <property type="entry name" value="MTTASE_N"/>
    <property type="match status" value="1"/>
</dbReference>
<dbReference type="PROSITE" id="PS01278">
    <property type="entry name" value="MTTASE_RADICAL"/>
    <property type="match status" value="1"/>
</dbReference>
<dbReference type="PROSITE" id="PS51918">
    <property type="entry name" value="RADICAL_SAM"/>
    <property type="match status" value="1"/>
</dbReference>
<dbReference type="PROSITE" id="PS50926">
    <property type="entry name" value="TRAM"/>
    <property type="match status" value="1"/>
</dbReference>
<name>MIAB_NOCSJ</name>
<comment type="function">
    <text evidence="1">Catalyzes the methylthiolation of N6-(dimethylallyl)adenosine (i(6)A), leading to the formation of 2-methylthio-N6-(dimethylallyl)adenosine (ms(2)i(6)A) at position 37 in tRNAs that read codons beginning with uridine.</text>
</comment>
<comment type="catalytic activity">
    <reaction evidence="1">
        <text>N(6)-dimethylallyladenosine(37) in tRNA + (sulfur carrier)-SH + AH2 + 2 S-adenosyl-L-methionine = 2-methylsulfanyl-N(6)-dimethylallyladenosine(37) in tRNA + (sulfur carrier)-H + 5'-deoxyadenosine + L-methionine + A + S-adenosyl-L-homocysteine + 2 H(+)</text>
        <dbReference type="Rhea" id="RHEA:37067"/>
        <dbReference type="Rhea" id="RHEA-COMP:10375"/>
        <dbReference type="Rhea" id="RHEA-COMP:10376"/>
        <dbReference type="Rhea" id="RHEA-COMP:14737"/>
        <dbReference type="Rhea" id="RHEA-COMP:14739"/>
        <dbReference type="ChEBI" id="CHEBI:13193"/>
        <dbReference type="ChEBI" id="CHEBI:15378"/>
        <dbReference type="ChEBI" id="CHEBI:17319"/>
        <dbReference type="ChEBI" id="CHEBI:17499"/>
        <dbReference type="ChEBI" id="CHEBI:29917"/>
        <dbReference type="ChEBI" id="CHEBI:57844"/>
        <dbReference type="ChEBI" id="CHEBI:57856"/>
        <dbReference type="ChEBI" id="CHEBI:59789"/>
        <dbReference type="ChEBI" id="CHEBI:64428"/>
        <dbReference type="ChEBI" id="CHEBI:74415"/>
        <dbReference type="ChEBI" id="CHEBI:74417"/>
        <dbReference type="EC" id="2.8.4.3"/>
    </reaction>
</comment>
<comment type="cofactor">
    <cofactor evidence="1">
        <name>[4Fe-4S] cluster</name>
        <dbReference type="ChEBI" id="CHEBI:49883"/>
    </cofactor>
    <text evidence="1">Binds 2 [4Fe-4S] clusters. One cluster is coordinated with 3 cysteines and an exchangeable S-adenosyl-L-methionine.</text>
</comment>
<comment type="subunit">
    <text evidence="1">Monomer.</text>
</comment>
<comment type="subcellular location">
    <subcellularLocation>
        <location evidence="1">Cytoplasm</location>
    </subcellularLocation>
</comment>
<comment type="similarity">
    <text evidence="1">Belongs to the methylthiotransferase family. MiaB subfamily.</text>
</comment>
<gene>
    <name evidence="1" type="primary">miaB</name>
    <name type="ordered locus">Noca_3847</name>
</gene>
<proteinExistence type="inferred from homology"/>